<comment type="function">
    <text evidence="1">Catalyzes the formation of 6,7-dimethyl-8-ribityllumazine by condensation of 5-amino-6-(D-ribitylamino)uracil with 3,4-dihydroxy-2-butanone 4-phosphate. This is the penultimate step in the biosynthesis of riboflavin.</text>
</comment>
<comment type="catalytic activity">
    <reaction evidence="1">
        <text>(2S)-2-hydroxy-3-oxobutyl phosphate + 5-amino-6-(D-ribitylamino)uracil = 6,7-dimethyl-8-(1-D-ribityl)lumazine + phosphate + 2 H2O + H(+)</text>
        <dbReference type="Rhea" id="RHEA:26152"/>
        <dbReference type="ChEBI" id="CHEBI:15377"/>
        <dbReference type="ChEBI" id="CHEBI:15378"/>
        <dbReference type="ChEBI" id="CHEBI:15934"/>
        <dbReference type="ChEBI" id="CHEBI:43474"/>
        <dbReference type="ChEBI" id="CHEBI:58201"/>
        <dbReference type="ChEBI" id="CHEBI:58830"/>
        <dbReference type="EC" id="2.5.1.78"/>
    </reaction>
</comment>
<comment type="pathway">
    <text evidence="1">Cofactor biosynthesis; riboflavin biosynthesis; riboflavin from 2-hydroxy-3-oxobutyl phosphate and 5-amino-6-(D-ribitylamino)uracil: step 1/2.</text>
</comment>
<comment type="subunit">
    <text evidence="1">Forms an icosahedral capsid composed of 60 subunits, arranged as a dodecamer of pentamers.</text>
</comment>
<comment type="similarity">
    <text evidence="1">Belongs to the DMRL synthase family.</text>
</comment>
<keyword id="KW-0686">Riboflavin biosynthesis</keyword>
<keyword id="KW-0808">Transferase</keyword>
<dbReference type="EC" id="2.5.1.78" evidence="1"/>
<dbReference type="EMBL" id="AP008232">
    <property type="protein sequence ID" value="BAE73927.1"/>
    <property type="molecule type" value="Genomic_DNA"/>
</dbReference>
<dbReference type="RefSeq" id="WP_011410405.1">
    <property type="nucleotide sequence ID" value="NC_007712.1"/>
</dbReference>
<dbReference type="SMR" id="Q2NV98"/>
<dbReference type="STRING" id="343509.SG0652"/>
<dbReference type="KEGG" id="sgl:SG0652"/>
<dbReference type="eggNOG" id="COG0054">
    <property type="taxonomic scope" value="Bacteria"/>
</dbReference>
<dbReference type="HOGENOM" id="CLU_089358_1_1_6"/>
<dbReference type="OrthoDB" id="9809709at2"/>
<dbReference type="BioCyc" id="SGLO343509:SGP1_RS05660-MONOMER"/>
<dbReference type="UniPathway" id="UPA00275">
    <property type="reaction ID" value="UER00404"/>
</dbReference>
<dbReference type="Proteomes" id="UP000001932">
    <property type="component" value="Chromosome"/>
</dbReference>
<dbReference type="GO" id="GO:0005829">
    <property type="term" value="C:cytosol"/>
    <property type="evidence" value="ECO:0007669"/>
    <property type="project" value="TreeGrafter"/>
</dbReference>
<dbReference type="GO" id="GO:0009349">
    <property type="term" value="C:riboflavin synthase complex"/>
    <property type="evidence" value="ECO:0007669"/>
    <property type="project" value="InterPro"/>
</dbReference>
<dbReference type="GO" id="GO:0000906">
    <property type="term" value="F:6,7-dimethyl-8-ribityllumazine synthase activity"/>
    <property type="evidence" value="ECO:0007669"/>
    <property type="project" value="UniProtKB-UniRule"/>
</dbReference>
<dbReference type="GO" id="GO:0009231">
    <property type="term" value="P:riboflavin biosynthetic process"/>
    <property type="evidence" value="ECO:0007669"/>
    <property type="project" value="UniProtKB-UniRule"/>
</dbReference>
<dbReference type="CDD" id="cd09209">
    <property type="entry name" value="Lumazine_synthase-I"/>
    <property type="match status" value="1"/>
</dbReference>
<dbReference type="FunFam" id="3.40.50.960:FF:000001">
    <property type="entry name" value="6,7-dimethyl-8-ribityllumazine synthase"/>
    <property type="match status" value="1"/>
</dbReference>
<dbReference type="Gene3D" id="3.40.50.960">
    <property type="entry name" value="Lumazine/riboflavin synthase"/>
    <property type="match status" value="1"/>
</dbReference>
<dbReference type="HAMAP" id="MF_00178">
    <property type="entry name" value="Lumazine_synth"/>
    <property type="match status" value="1"/>
</dbReference>
<dbReference type="InterPro" id="IPR034964">
    <property type="entry name" value="LS"/>
</dbReference>
<dbReference type="InterPro" id="IPR002180">
    <property type="entry name" value="LS/RS"/>
</dbReference>
<dbReference type="InterPro" id="IPR036467">
    <property type="entry name" value="LS/RS_sf"/>
</dbReference>
<dbReference type="NCBIfam" id="TIGR00114">
    <property type="entry name" value="lumazine-synth"/>
    <property type="match status" value="1"/>
</dbReference>
<dbReference type="NCBIfam" id="NF000812">
    <property type="entry name" value="PRK00061.1-4"/>
    <property type="match status" value="1"/>
</dbReference>
<dbReference type="PANTHER" id="PTHR21058:SF0">
    <property type="entry name" value="6,7-DIMETHYL-8-RIBITYLLUMAZINE SYNTHASE"/>
    <property type="match status" value="1"/>
</dbReference>
<dbReference type="PANTHER" id="PTHR21058">
    <property type="entry name" value="6,7-DIMETHYL-8-RIBITYLLUMAZINE SYNTHASE DMRL SYNTHASE LUMAZINE SYNTHASE"/>
    <property type="match status" value="1"/>
</dbReference>
<dbReference type="Pfam" id="PF00885">
    <property type="entry name" value="DMRL_synthase"/>
    <property type="match status" value="1"/>
</dbReference>
<dbReference type="SUPFAM" id="SSF52121">
    <property type="entry name" value="Lumazine synthase"/>
    <property type="match status" value="1"/>
</dbReference>
<protein>
    <recommendedName>
        <fullName evidence="1">6,7-dimethyl-8-ribityllumazine synthase</fullName>
        <shortName evidence="1">DMRL synthase</shortName>
        <shortName evidence="1">LS</shortName>
        <shortName evidence="1">Lumazine synthase</shortName>
        <ecNumber evidence="1">2.5.1.78</ecNumber>
    </recommendedName>
</protein>
<feature type="chain" id="PRO_1000040519" description="6,7-dimethyl-8-ribityllumazine synthase">
    <location>
        <begin position="1"/>
        <end position="156"/>
    </location>
</feature>
<feature type="active site" description="Proton donor" evidence="1">
    <location>
        <position position="89"/>
    </location>
</feature>
<feature type="binding site" evidence="1">
    <location>
        <position position="22"/>
    </location>
    <ligand>
        <name>5-amino-6-(D-ribitylamino)uracil</name>
        <dbReference type="ChEBI" id="CHEBI:15934"/>
    </ligand>
</feature>
<feature type="binding site" evidence="1">
    <location>
        <begin position="57"/>
        <end position="59"/>
    </location>
    <ligand>
        <name>5-amino-6-(D-ribitylamino)uracil</name>
        <dbReference type="ChEBI" id="CHEBI:15934"/>
    </ligand>
</feature>
<feature type="binding site" evidence="1">
    <location>
        <begin position="81"/>
        <end position="83"/>
    </location>
    <ligand>
        <name>5-amino-6-(D-ribitylamino)uracil</name>
        <dbReference type="ChEBI" id="CHEBI:15934"/>
    </ligand>
</feature>
<feature type="binding site" evidence="1">
    <location>
        <begin position="86"/>
        <end position="87"/>
    </location>
    <ligand>
        <name>(2S)-2-hydroxy-3-oxobutyl phosphate</name>
        <dbReference type="ChEBI" id="CHEBI:58830"/>
    </ligand>
</feature>
<feature type="binding site" evidence="1">
    <location>
        <position position="114"/>
    </location>
    <ligand>
        <name>5-amino-6-(D-ribitylamino)uracil</name>
        <dbReference type="ChEBI" id="CHEBI:15934"/>
    </ligand>
</feature>
<feature type="binding site" evidence="1">
    <location>
        <position position="128"/>
    </location>
    <ligand>
        <name>(2S)-2-hydroxy-3-oxobutyl phosphate</name>
        <dbReference type="ChEBI" id="CHEBI:58830"/>
    </ligand>
</feature>
<sequence length="156" mass="16056">MNVIEGVVAAPDARVAIAIARFNHFINDSLLNGAVDALKRIGQVKDENITVVWVPGAYELPLAVSALADSKNYDAVVALGTVIRGGTAHFEFVAGECSSGLSAVAARAALPVAFGVLTTESIEQAIERAGTKAGNKGAEAALTALEMIKVLQAIKA</sequence>
<organism>
    <name type="scientific">Sodalis glossinidius (strain morsitans)</name>
    <dbReference type="NCBI Taxonomy" id="343509"/>
    <lineage>
        <taxon>Bacteria</taxon>
        <taxon>Pseudomonadati</taxon>
        <taxon>Pseudomonadota</taxon>
        <taxon>Gammaproteobacteria</taxon>
        <taxon>Enterobacterales</taxon>
        <taxon>Bruguierivoracaceae</taxon>
        <taxon>Sodalis</taxon>
    </lineage>
</organism>
<proteinExistence type="inferred from homology"/>
<gene>
    <name evidence="1" type="primary">ribH</name>
    <name type="ordered locus">SG0652</name>
</gene>
<evidence type="ECO:0000255" key="1">
    <source>
        <dbReference type="HAMAP-Rule" id="MF_00178"/>
    </source>
</evidence>
<accession>Q2NV98</accession>
<reference key="1">
    <citation type="journal article" date="2006" name="Genome Res.">
        <title>Massive genome erosion and functional adaptations provide insights into the symbiotic lifestyle of Sodalis glossinidius in the tsetse host.</title>
        <authorList>
            <person name="Toh H."/>
            <person name="Weiss B.L."/>
            <person name="Perkin S.A.H."/>
            <person name="Yamashita A."/>
            <person name="Oshima K."/>
            <person name="Hattori M."/>
            <person name="Aksoy S."/>
        </authorList>
    </citation>
    <scope>NUCLEOTIDE SEQUENCE [LARGE SCALE GENOMIC DNA]</scope>
    <source>
        <strain>morsitans</strain>
    </source>
</reference>
<name>RISB_SODGM</name>